<name>NTT4_ENCCU</name>
<comment type="function">
    <text evidence="2">ATP transporter involved in the uptake of ATP from the host cell cytoplasm. Provides the microsporidian cell with host ATP in exchange for ADP. This is an obligate exchange system. This energy acquiring activity is an important component of microsporidian parasitism.</text>
</comment>
<comment type="biophysicochemical properties">
    <kinetics>
        <KM evidence="2">2.6 uM for ATP uptake</KM>
    </kinetics>
</comment>
<comment type="subcellular location">
    <subcellularLocation>
        <location evidence="2">Cell membrane</location>
        <topology evidence="2">Multi-pass membrane protein</topology>
    </subcellularLocation>
    <text>Only found on the surface of parasites living inside host cells.</text>
</comment>
<comment type="similarity">
    <text evidence="3">Belongs to the ADP/ATP translocase tlc family.</text>
</comment>
<organism>
    <name type="scientific">Encephalitozoon cuniculi (strain GB-M1)</name>
    <name type="common">Microsporidian parasite</name>
    <dbReference type="NCBI Taxonomy" id="284813"/>
    <lineage>
        <taxon>Eukaryota</taxon>
        <taxon>Fungi</taxon>
        <taxon>Fungi incertae sedis</taxon>
        <taxon>Microsporidia</taxon>
        <taxon>Unikaryonidae</taxon>
        <taxon>Encephalitozoon</taxon>
    </lineage>
</organism>
<accession>Q8SUG7</accession>
<feature type="chain" id="PRO_0000382927" description="ADP,ATP carrier protein 4">
    <location>
        <begin position="1"/>
        <end position="536"/>
    </location>
</feature>
<feature type="transmembrane region" description="Helical" evidence="1">
    <location>
        <begin position="44"/>
        <end position="64"/>
    </location>
</feature>
<feature type="transmembrane region" description="Helical" evidence="1">
    <location>
        <begin position="77"/>
        <end position="97"/>
    </location>
</feature>
<feature type="transmembrane region" description="Helical" evidence="1">
    <location>
        <begin position="109"/>
        <end position="129"/>
    </location>
</feature>
<feature type="transmembrane region" description="Helical" evidence="1">
    <location>
        <begin position="172"/>
        <end position="194"/>
    </location>
</feature>
<feature type="transmembrane region" description="Helical" evidence="1">
    <location>
        <begin position="205"/>
        <end position="225"/>
    </location>
</feature>
<feature type="transmembrane region" description="Helical" evidence="1">
    <location>
        <begin position="244"/>
        <end position="264"/>
    </location>
</feature>
<feature type="transmembrane region" description="Helical" evidence="1">
    <location>
        <begin position="309"/>
        <end position="329"/>
    </location>
</feature>
<feature type="transmembrane region" description="Helical" evidence="1">
    <location>
        <begin position="349"/>
        <end position="369"/>
    </location>
</feature>
<feature type="transmembrane region" description="Helical" evidence="1">
    <location>
        <begin position="378"/>
        <end position="398"/>
    </location>
</feature>
<feature type="transmembrane region" description="Helical" evidence="1">
    <location>
        <begin position="465"/>
        <end position="485"/>
    </location>
</feature>
<feature type="transmembrane region" description="Helical" evidence="1">
    <location>
        <begin position="493"/>
        <end position="513"/>
    </location>
</feature>
<feature type="glycosylation site" description="N-linked (GlcNAc...) asparagine" evidence="1">
    <location>
        <position position="400"/>
    </location>
</feature>
<feature type="glycosylation site" description="N-linked (GlcNAc...) asparagine" evidence="1">
    <location>
        <position position="421"/>
    </location>
</feature>
<protein>
    <recommendedName>
        <fullName>ADP,ATP carrier protein 4</fullName>
    </recommendedName>
    <alternativeName>
        <fullName>ADP/ATP translocase 4</fullName>
    </alternativeName>
    <alternativeName>
        <fullName>Nucleotide transporter 4</fullName>
    </alternativeName>
</protein>
<dbReference type="EMBL" id="EU040269">
    <property type="protein sequence ID" value="ABW20410.1"/>
    <property type="molecule type" value="Genomic_DNA"/>
</dbReference>
<dbReference type="EMBL" id="AL590449">
    <property type="protein sequence ID" value="CAD25761.1"/>
    <property type="molecule type" value="Genomic_DNA"/>
</dbReference>
<dbReference type="RefSeq" id="NP_586157.1">
    <property type="nucleotide sequence ID" value="NM_001041990.1"/>
</dbReference>
<dbReference type="TCDB" id="2.A.12.1.13">
    <property type="family name" value="the atp:adp antiporter (aaa) family"/>
</dbReference>
<dbReference type="GlyCosmos" id="Q8SUG7">
    <property type="glycosylation" value="2 sites, No reported glycans"/>
</dbReference>
<dbReference type="GeneID" id="859806"/>
<dbReference type="KEGG" id="ecu:ECU10_0420"/>
<dbReference type="VEuPathDB" id="MicrosporidiaDB:ECU10_0420"/>
<dbReference type="HOGENOM" id="CLU_023964_1_0_1"/>
<dbReference type="InParanoid" id="Q8SUG7"/>
<dbReference type="OrthoDB" id="2190844at2759"/>
<dbReference type="Proteomes" id="UP000000819">
    <property type="component" value="Chromosome X"/>
</dbReference>
<dbReference type="GO" id="GO:0005886">
    <property type="term" value="C:plasma membrane"/>
    <property type="evidence" value="ECO:0007669"/>
    <property type="project" value="UniProtKB-SubCell"/>
</dbReference>
<dbReference type="GO" id="GO:0005524">
    <property type="term" value="F:ATP binding"/>
    <property type="evidence" value="ECO:0007669"/>
    <property type="project" value="UniProtKB-KW"/>
</dbReference>
<dbReference type="GO" id="GO:0005471">
    <property type="term" value="F:ATP:ADP antiporter activity"/>
    <property type="evidence" value="ECO:0007669"/>
    <property type="project" value="InterPro"/>
</dbReference>
<dbReference type="InterPro" id="IPR004667">
    <property type="entry name" value="ADP_ATP_car_bac_type"/>
</dbReference>
<dbReference type="PANTHER" id="PTHR31187">
    <property type="match status" value="1"/>
</dbReference>
<dbReference type="PANTHER" id="PTHR31187:SF1">
    <property type="entry name" value="ADP,ATP CARRIER PROTEIN 1"/>
    <property type="match status" value="1"/>
</dbReference>
<dbReference type="Pfam" id="PF03219">
    <property type="entry name" value="TLC"/>
    <property type="match status" value="1"/>
</dbReference>
<gene>
    <name type="primary">NTT4</name>
    <name type="ordered locus">ECU10_0420</name>
</gene>
<proteinExistence type="evidence at protein level"/>
<evidence type="ECO:0000255" key="1"/>
<evidence type="ECO:0000269" key="2">
    <source>
    </source>
</evidence>
<evidence type="ECO:0000305" key="3"/>
<reference key="1">
    <citation type="journal article" date="2008" name="Nature">
        <title>A novel route for ATP acquisition by the remnant mitochondria of Encephalitozoon cuniculi.</title>
        <authorList>
            <person name="Tsaousis A.D."/>
            <person name="Kunji E.R.S."/>
            <person name="Goldberg A.V."/>
            <person name="Lucocq J.M."/>
            <person name="Hirt R.P."/>
            <person name="Embley T.M."/>
        </authorList>
    </citation>
    <scope>NUCLEOTIDE SEQUENCE [GENOMIC DNA]</scope>
    <scope>SUBCELLULAR LOCATION</scope>
    <scope>FUNCTION</scope>
    <scope>BIOPHYSICOCHEMICAL PROPERTIES</scope>
</reference>
<reference key="2">
    <citation type="journal article" date="2001" name="Nature">
        <title>Genome sequence and gene compaction of the eukaryote parasite Encephalitozoon cuniculi.</title>
        <authorList>
            <person name="Katinka M.D."/>
            <person name="Duprat S."/>
            <person name="Cornillot E."/>
            <person name="Metenier G."/>
            <person name="Thomarat F."/>
            <person name="Prensier G."/>
            <person name="Barbe V."/>
            <person name="Peyretaillade E."/>
            <person name="Brottier P."/>
            <person name="Wincker P."/>
            <person name="Delbac F."/>
            <person name="El Alaoui H."/>
            <person name="Peyret P."/>
            <person name="Saurin W."/>
            <person name="Gouy M."/>
            <person name="Weissenbach J."/>
            <person name="Vivares C.P."/>
        </authorList>
    </citation>
    <scope>NUCLEOTIDE SEQUENCE [LARGE SCALE GENOMIC DNA]</scope>
    <source>
        <strain>GB-M1</strain>
    </source>
</reference>
<sequence>MSENREIDATDRRDKTFDKEKLRPHVYSSVAGGMRSTSGDTKAVLLFSLLFALLSYIDAFLYVLGDMVMMNTQMPSSILFIKSVLVLPMTFFFIVIVQKGLRYLSQPRMLEVILIISSVFFLLFGFVIWPYCKRLQPDFFWSRDIFSDGKMKTRHLDFFFPIFLVFSEWASTMLYLVAELWGSLIISFMFFSRAIHQCTEAQVKKFLPTISLISAVVFLSSGLLTKSLNSRRDALPYHEKERLFSQVFIVTSALTVMSAITSFFTDRALAKDDPRHKGKKEHKVRKIGFAGSLKMMQKSRFLRAMTESVVAASVCSNIFEAIYRGGIVLGAVQSSTSKSSYMNRLNAMAQIITSIFLLVMFFKPATHLIERRGWFPVAITAPIVAIITLVLFFPMVFFNNITEGDLIASGEEYVGSFVLENYTGMFLTTIIRISKYCFFDVAKEAASIRVSPVHRHSFRGIHDGLGINIGKTIGSVYCTLVTVVFDVRDVRNVVSVSTVFVGVFCVIWIRSILHINKKYKESIERNDFINVELAEG</sequence>
<keyword id="KW-0067">ATP-binding</keyword>
<keyword id="KW-1003">Cell membrane</keyword>
<keyword id="KW-0325">Glycoprotein</keyword>
<keyword id="KW-0472">Membrane</keyword>
<keyword id="KW-0547">Nucleotide-binding</keyword>
<keyword id="KW-1185">Reference proteome</keyword>
<keyword id="KW-0812">Transmembrane</keyword>
<keyword id="KW-1133">Transmembrane helix</keyword>
<keyword id="KW-0813">Transport</keyword>